<name>G5P_BPM13</name>
<protein>
    <recommendedName>
        <fullName>DNA-Binding protein G5P</fullName>
        <shortName>G5P</shortName>
    </recommendedName>
    <alternativeName>
        <fullName>Single-stranded DNA-binding protein</fullName>
    </alternativeName>
</protein>
<organismHost>
    <name type="scientific">Escherichia coli</name>
    <dbReference type="NCBI Taxonomy" id="562"/>
</organismHost>
<gene>
    <name type="primary">V</name>
</gene>
<accession>P69544</accession>
<accession>P03669</accession>
<sequence length="87" mass="9688">MIKVEIKPSQAQFTTRSGVSRQGKPYSLNEQLCYVDLGNEYPVLVKITLDEGQPAYAPGLYTVHLSSFKVGQFGSLMIDRLRLVPAK</sequence>
<comment type="function">
    <text>Binds to DNA in a highly cooperative manner without pronounced sequence specificity. During synthesis of the single-stranded (progeny) viral DNA, prevents the conversion into the double-stranded replicative form. G5P is displaced by the capsid protein G8P during phage assembly on the inner bacterial membrane.</text>
</comment>
<comment type="subunit">
    <text>Homodimer.</text>
</comment>
<comment type="similarity">
    <text evidence="1">Belongs to the inovirus G5P protein family.</text>
</comment>
<proteinExistence type="evidence at protein level"/>
<feature type="chain" id="PRO_0000098196" description="DNA-Binding protein G5P">
    <location>
        <begin position="1"/>
        <end position="87"/>
    </location>
</feature>
<feature type="site" description="Involved in DNA binding">
    <location>
        <position position="16"/>
    </location>
</feature>
<feature type="site" description="Involved in DNA binding">
    <location>
        <position position="21"/>
    </location>
</feature>
<feature type="site" description="Involved in DNA binding">
    <location>
        <position position="26"/>
    </location>
</feature>
<feature type="site" description="Involved in DNA binding">
    <location>
        <position position="34"/>
    </location>
</feature>
<feature type="site" description="Involved in DNA binding, and in the dimer-dimer interactions of the protein-ssDNA complex">
    <location>
        <position position="41"/>
    </location>
</feature>
<feature type="site" description="Involved in DNA binding">
    <location>
        <position position="46"/>
    </location>
</feature>
<feature type="strand" evidence="2">
    <location>
        <begin position="3"/>
        <end position="5"/>
    </location>
</feature>
<feature type="helix" evidence="2">
    <location>
        <begin position="8"/>
        <end position="10"/>
    </location>
</feature>
<feature type="strand" evidence="2">
    <location>
        <begin position="19"/>
        <end position="25"/>
    </location>
</feature>
<feature type="strand" evidence="2">
    <location>
        <begin position="29"/>
        <end position="35"/>
    </location>
</feature>
<feature type="strand" evidence="2">
    <location>
        <begin position="39"/>
        <end position="41"/>
    </location>
</feature>
<feature type="strand" evidence="2">
    <location>
        <begin position="43"/>
        <end position="49"/>
    </location>
</feature>
<feature type="strand" evidence="2">
    <location>
        <begin position="51"/>
        <end position="53"/>
    </location>
</feature>
<feature type="strand" evidence="2">
    <location>
        <begin position="58"/>
        <end position="64"/>
    </location>
</feature>
<feature type="helix" evidence="2">
    <location>
        <begin position="65"/>
        <end position="67"/>
    </location>
</feature>
<feature type="strand" evidence="3">
    <location>
        <begin position="68"/>
        <end position="70"/>
    </location>
</feature>
<feature type="turn" evidence="2">
    <location>
        <begin position="72"/>
        <end position="74"/>
    </location>
</feature>
<feature type="strand" evidence="2">
    <location>
        <begin position="77"/>
        <end position="80"/>
    </location>
</feature>
<feature type="strand" evidence="2">
    <location>
        <begin position="82"/>
        <end position="85"/>
    </location>
</feature>
<organism>
    <name type="scientific">Enterobacteria phage M13</name>
    <name type="common">Bacteriophage M13</name>
    <dbReference type="NCBI Taxonomy" id="1977402"/>
    <lineage>
        <taxon>Viruses</taxon>
        <taxon>Monodnaviria</taxon>
        <taxon>Loebvirae</taxon>
        <taxon>Hofneiviricota</taxon>
        <taxon>Faserviricetes</taxon>
        <taxon>Tubulavirales</taxon>
        <taxon>Inoviridae</taxon>
        <taxon>Inovirus</taxon>
    </lineage>
</organism>
<reference key="1">
    <citation type="journal article" date="1980" name="Gene">
        <title>Nucleotide sequence of the filamentous bacteriophage M13 DNA genome: comparison with phage fd.</title>
        <authorList>
            <person name="van Wezenbeek P.M.G.F."/>
            <person name="Hulsebos T.J.M."/>
            <person name="Schoenmakers J.G.G."/>
        </authorList>
    </citation>
    <scope>NUCLEOTIDE SEQUENCE [GENOMIC DNA]</scope>
</reference>
<reference key="2">
    <citation type="journal article" date="1974" name="Biochem. Biophys. Res. Commun.">
        <title>The amino acid sequence of gene 5 protein of bacteriophage M13.</title>
        <authorList>
            <person name="Cuypers T."/>
            <person name="van der Ouderaa F.J."/>
            <person name="de Jong W.W."/>
        </authorList>
    </citation>
    <scope>PROTEIN SEQUENCE OF 1-19 AND 87</scope>
</reference>
<reference key="3">
    <citation type="journal article" date="1991" name="Eur. J. Biochem.">
        <title>Sequence-specific 1H-NMR assignment and secondary structure of the Tyr-41--&gt;His mutant of the single-stranded DNA binding protein, gene V protein, encoded by the filamentous bacteriophage M13.</title>
        <authorList>
            <person name="Folkers P.J.M."/>
            <person name="van Duynhoven J.P.M."/>
            <person name="Jonker A.J."/>
            <person name="Harmsen B.J.M."/>
            <person name="Konings R.N."/>
        </authorList>
    </citation>
    <scope>STRUCTURE BY NMR</scope>
</reference>
<reference key="4">
    <citation type="journal article" date="1990" name="FEBS Lett.">
        <title>Structure of the DNA binding wing of the gene-V encoded single-stranded DNA binding protein of the filamentous bacteriophage M13.</title>
        <authorList>
            <person name="van Duynhoven J.P."/>
            <person name="Folkers P.J."/>
            <person name="Stassen A.P."/>
            <person name="Harmsen B.J."/>
            <person name="Konings R.N."/>
            <person name="Hilbers C.W."/>
        </authorList>
    </citation>
    <scope>STRUCTURE BY NMR OF MUTANT HIS-41</scope>
</reference>
<reference key="5">
    <citation type="journal article" date="1994" name="J. Mol. Biol.">
        <title>The solution structure of the Tyr41--&gt;His mutant of the single-stranded DNA binding protein encoded by gene V of the filamentous bacteriophage M13.</title>
        <authorList>
            <person name="Folkers P.J.M."/>
            <person name="Nilges M."/>
            <person name="Folmer R.H.A."/>
            <person name="Konings R.N.H."/>
            <person name="Hilbers C.W."/>
        </authorList>
    </citation>
    <scope>STRUCTURE BY NMR OF MUTANT HIS-41</scope>
</reference>
<reference key="6">
    <citation type="journal article" date="1995" name="Eur. J. Biochem.">
        <title>Refined solution structure of the Tyr41--&gt;His mutant of the M13 gene V protein. A comparison with the crystal structure.</title>
        <authorList>
            <person name="Prompers J.J."/>
            <person name="Folmer R.H.A."/>
            <person name="Nilges M."/>
            <person name="Folkers P.J.M."/>
            <person name="Konings R.N.H."/>
            <person name="Hilbers C.W."/>
        </authorList>
    </citation>
    <scope>STRUCTURE BY NMR OF MUTANT HIS-41</scope>
</reference>
<dbReference type="EMBL" id="V00604">
    <property type="protein sequence ID" value="CAA23858.1"/>
    <property type="molecule type" value="Genomic_DNA"/>
</dbReference>
<dbReference type="PIR" id="C04271">
    <property type="entry name" value="DDBPM3"/>
</dbReference>
<dbReference type="RefSeq" id="NP_510887.1">
    <property type="nucleotide sequence ID" value="NC_003287.2"/>
</dbReference>
<dbReference type="RefSeq" id="YP_010774614.1">
    <property type="nucleotide sequence ID" value="NC_074765.1"/>
</dbReference>
<dbReference type="PDB" id="2GVA">
    <property type="method" value="NMR"/>
    <property type="chains" value="A/B=1-87"/>
</dbReference>
<dbReference type="PDB" id="2GVB">
    <property type="method" value="NMR"/>
    <property type="chains" value="A/B=1-87"/>
</dbReference>
<dbReference type="PDB" id="8ACZ">
    <property type="method" value="NMR"/>
    <property type="chains" value="A=1-87"/>
</dbReference>
<dbReference type="PDBsum" id="2GVA"/>
<dbReference type="PDBsum" id="2GVB"/>
<dbReference type="PDBsum" id="8ACZ"/>
<dbReference type="BMRB" id="P69544"/>
<dbReference type="SMR" id="P69544"/>
<dbReference type="GeneID" id="80510925"/>
<dbReference type="GeneID" id="927330"/>
<dbReference type="KEGG" id="vg:927330"/>
<dbReference type="OrthoDB" id="39007at10239"/>
<dbReference type="EvolutionaryTrace" id="P69544"/>
<dbReference type="Proteomes" id="UP000002111">
    <property type="component" value="Genome"/>
</dbReference>
<dbReference type="GO" id="GO:0003697">
    <property type="term" value="F:single-stranded DNA binding"/>
    <property type="evidence" value="ECO:0007669"/>
    <property type="project" value="InterPro"/>
</dbReference>
<dbReference type="GO" id="GO:0006260">
    <property type="term" value="P:DNA replication"/>
    <property type="evidence" value="ECO:0007669"/>
    <property type="project" value="UniProtKB-KW"/>
</dbReference>
<dbReference type="GO" id="GO:0039684">
    <property type="term" value="P:rolling circle single-stranded viral DNA replication"/>
    <property type="evidence" value="ECO:0000314"/>
    <property type="project" value="UniProtKB"/>
</dbReference>
<dbReference type="FunFam" id="2.40.50.140:FF:000515">
    <property type="entry name" value="DNA-Binding protein G5P"/>
    <property type="match status" value="1"/>
</dbReference>
<dbReference type="Gene3D" id="2.40.50.140">
    <property type="entry name" value="Nucleic acid-binding proteins"/>
    <property type="match status" value="1"/>
</dbReference>
<dbReference type="InterPro" id="IPR012340">
    <property type="entry name" value="NA-bd_OB-fold"/>
</dbReference>
<dbReference type="InterPro" id="IPR003512">
    <property type="entry name" value="Phage_M13_G5P_DNA-bd"/>
</dbReference>
<dbReference type="Pfam" id="PF02303">
    <property type="entry name" value="Phage_DNA_bind"/>
    <property type="match status" value="1"/>
</dbReference>
<dbReference type="SUPFAM" id="SSF50249">
    <property type="entry name" value="Nucleic acid-binding proteins"/>
    <property type="match status" value="1"/>
</dbReference>
<keyword id="KW-0002">3D-structure</keyword>
<keyword id="KW-0903">Direct protein sequencing</keyword>
<keyword id="KW-0235">DNA replication</keyword>
<keyword id="KW-0238">DNA-binding</keyword>
<keyword id="KW-1185">Reference proteome</keyword>
<evidence type="ECO:0000305" key="1"/>
<evidence type="ECO:0007829" key="2">
    <source>
        <dbReference type="PDB" id="2GVA"/>
    </source>
</evidence>
<evidence type="ECO:0007829" key="3">
    <source>
        <dbReference type="PDB" id="2GVB"/>
    </source>
</evidence>